<protein>
    <recommendedName>
        <fullName>Iron-dependent extradiol dioxygenase</fullName>
        <ecNumber evidence="2">1.13.11.25</ecNumber>
    </recommendedName>
</protein>
<evidence type="ECO:0000255" key="1">
    <source>
        <dbReference type="PROSITE-ProRule" id="PRU01163"/>
    </source>
</evidence>
<evidence type="ECO:0000269" key="2">
    <source>
    </source>
</evidence>
<evidence type="ECO:0000269" key="3">
    <source>
    </source>
</evidence>
<evidence type="ECO:0000269" key="4">
    <source>
    </source>
</evidence>
<evidence type="ECO:0000305" key="5"/>
<evidence type="ECO:0007829" key="6">
    <source>
        <dbReference type="PDB" id="2ZI8"/>
    </source>
</evidence>
<evidence type="ECO:0007829" key="7">
    <source>
        <dbReference type="PDB" id="2ZYQ"/>
    </source>
</evidence>
<keyword id="KW-0002">3D-structure</keyword>
<keyword id="KW-0058">Aromatic hydrocarbons catabolism</keyword>
<keyword id="KW-0153">Cholesterol metabolism</keyword>
<keyword id="KW-0223">Dioxygenase</keyword>
<keyword id="KW-0408">Iron</keyword>
<keyword id="KW-0442">Lipid degradation</keyword>
<keyword id="KW-0443">Lipid metabolism</keyword>
<keyword id="KW-0479">Metal-binding</keyword>
<keyword id="KW-0560">Oxidoreductase</keyword>
<keyword id="KW-1185">Reference proteome</keyword>
<keyword id="KW-0677">Repeat</keyword>
<keyword id="KW-0753">Steroid metabolism</keyword>
<keyword id="KW-1207">Sterol metabolism</keyword>
<reference key="1">
    <citation type="journal article" date="1998" name="Nature">
        <title>Deciphering the biology of Mycobacterium tuberculosis from the complete genome sequence.</title>
        <authorList>
            <person name="Cole S.T."/>
            <person name="Brosch R."/>
            <person name="Parkhill J."/>
            <person name="Garnier T."/>
            <person name="Churcher C.M."/>
            <person name="Harris D.E."/>
            <person name="Gordon S.V."/>
            <person name="Eiglmeier K."/>
            <person name="Gas S."/>
            <person name="Barry C.E. III"/>
            <person name="Tekaia F."/>
            <person name="Badcock K."/>
            <person name="Basham D."/>
            <person name="Brown D."/>
            <person name="Chillingworth T."/>
            <person name="Connor R."/>
            <person name="Davies R.M."/>
            <person name="Devlin K."/>
            <person name="Feltwell T."/>
            <person name="Gentles S."/>
            <person name="Hamlin N."/>
            <person name="Holroyd S."/>
            <person name="Hornsby T."/>
            <person name="Jagels K."/>
            <person name="Krogh A."/>
            <person name="McLean J."/>
            <person name="Moule S."/>
            <person name="Murphy L.D."/>
            <person name="Oliver S."/>
            <person name="Osborne J."/>
            <person name="Quail M.A."/>
            <person name="Rajandream M.A."/>
            <person name="Rogers J."/>
            <person name="Rutter S."/>
            <person name="Seeger K."/>
            <person name="Skelton S."/>
            <person name="Squares S."/>
            <person name="Squares R."/>
            <person name="Sulston J.E."/>
            <person name="Taylor K."/>
            <person name="Whitehead S."/>
            <person name="Barrell B.G."/>
        </authorList>
    </citation>
    <scope>NUCLEOTIDE SEQUENCE [LARGE SCALE GENOMIC DNA]</scope>
    <source>
        <strain>ATCC 25618 / H37Rv</strain>
    </source>
</reference>
<reference key="2">
    <citation type="journal article" date="2007" name="Mol. Microbiol.">
        <title>A highly conserved transcriptional repressor controls a large regulon involved in lipid degradation in Mycobacterium smegmatis and Mycobacterium tuberculosis.</title>
        <authorList>
            <person name="Kendall S.L."/>
            <person name="Withers M."/>
            <person name="Soffair C.N."/>
            <person name="Moreland N.J."/>
            <person name="Gurcha S."/>
            <person name="Sidders B."/>
            <person name="Frita R."/>
            <person name="Ten Bokum A."/>
            <person name="Besra G.S."/>
            <person name="Lott J.S."/>
            <person name="Stoker N.G."/>
        </authorList>
    </citation>
    <scope>INDUCTION</scope>
    <source>
        <strain>ATCC 25618 / H37Rv</strain>
    </source>
</reference>
<reference key="3">
    <citation type="journal article" date="2007" name="Proc. Natl. Acad. Sci. U.S.A.">
        <title>A gene cluster encoding cholesterol catabolism in a soil actinomycete provides insight into Mycobacterium tuberculosis survival in macrophages.</title>
        <authorList>
            <person name="Van der Geize R."/>
            <person name="Yam K."/>
            <person name="Heuser T."/>
            <person name="Wilbrink M.H."/>
            <person name="Hara H."/>
            <person name="Anderton M.C."/>
            <person name="Sim E."/>
            <person name="Dijkhuizen L."/>
            <person name="Davies J.E."/>
            <person name="Mohn W.W."/>
            <person name="Eltis L.D."/>
        </authorList>
    </citation>
    <scope>FUNCTION AS AN EXTRADIOL DIOXYGENASE</scope>
    <scope>CATALYTIC ACTIVITY</scope>
    <scope>BIOPHYSICOCHEMICAL PROPERTIES</scope>
    <source>
        <strain>ATCC 25618 / H37Rv</strain>
    </source>
</reference>
<reference key="4">
    <citation type="journal article" date="2011" name="Mol. Cell. Proteomics">
        <title>Proteogenomic analysis of Mycobacterium tuberculosis by high resolution mass spectrometry.</title>
        <authorList>
            <person name="Kelkar D.S."/>
            <person name="Kumar D."/>
            <person name="Kumar P."/>
            <person name="Balakrishnan L."/>
            <person name="Muthusamy B."/>
            <person name="Yadav A.K."/>
            <person name="Shrivastava P."/>
            <person name="Marimuthu A."/>
            <person name="Anand S."/>
            <person name="Sundaram H."/>
            <person name="Kingsbury R."/>
            <person name="Harsha H.C."/>
            <person name="Nair B."/>
            <person name="Prasad T.S."/>
            <person name="Chauhan D.S."/>
            <person name="Katoch K."/>
            <person name="Katoch V.M."/>
            <person name="Kumar P."/>
            <person name="Chaerkady R."/>
            <person name="Ramachandran S."/>
            <person name="Dash D."/>
            <person name="Pandey A."/>
        </authorList>
    </citation>
    <scope>IDENTIFICATION BY MASS SPECTROMETRY [LARGE SCALE ANALYSIS]</scope>
    <source>
        <strain>ATCC 25618 / H37Rv</strain>
    </source>
</reference>
<reference key="5">
    <citation type="journal article" date="2009" name="PLoS Pathog.">
        <title>Studies of a ring-cleaving dioxygenase illuminate the role of cholesterol metabolism in the pathogenesis of Mycobacterium tuberculosis.</title>
        <authorList>
            <person name="Yam K.C."/>
            <person name="D'Angelo I."/>
            <person name="Kalscheuer R."/>
            <person name="Zhu H."/>
            <person name="Wang J.X."/>
            <person name="Snieckus V."/>
            <person name="Ly L.H."/>
            <person name="Converse P.J."/>
            <person name="Jacobs W.R. Jr."/>
            <person name="Strynadka N."/>
            <person name="Eltis L.D."/>
        </authorList>
    </citation>
    <scope>X-RAY CRYSTALLOGRAPHY (2.0 ANGSTROMS) IN COMPLEX WITH SUBSTRATE AND IRON ION</scope>
    <scope>DISRUPTION PHENOTYPE</scope>
    <scope>COFACTOR</scope>
    <scope>SUBUNIT</scope>
    <source>
        <strain>ATCC 25618 / H37Rv</strain>
    </source>
</reference>
<organism>
    <name type="scientific">Mycobacterium tuberculosis (strain ATCC 25618 / H37Rv)</name>
    <dbReference type="NCBI Taxonomy" id="83332"/>
    <lineage>
        <taxon>Bacteria</taxon>
        <taxon>Bacillati</taxon>
        <taxon>Actinomycetota</taxon>
        <taxon>Actinomycetes</taxon>
        <taxon>Mycobacteriales</taxon>
        <taxon>Mycobacteriaceae</taxon>
        <taxon>Mycobacterium</taxon>
        <taxon>Mycobacterium tuberculosis complex</taxon>
    </lineage>
</organism>
<proteinExistence type="evidence at protein level"/>
<dbReference type="EC" id="1.13.11.25" evidence="2"/>
<dbReference type="EMBL" id="AL123456">
    <property type="protein sequence ID" value="CCP46391.1"/>
    <property type="molecule type" value="Genomic_DNA"/>
</dbReference>
<dbReference type="PIR" id="F70605">
    <property type="entry name" value="F70605"/>
</dbReference>
<dbReference type="RefSeq" id="NP_218085.1">
    <property type="nucleotide sequence ID" value="NC_000962.3"/>
</dbReference>
<dbReference type="RefSeq" id="WP_003419378.1">
    <property type="nucleotide sequence ID" value="NZ_NVQJ01000014.1"/>
</dbReference>
<dbReference type="PDB" id="2ZI8">
    <property type="method" value="X-ray"/>
    <property type="resolution" value="2.20 A"/>
    <property type="chains" value="A/B=1-300"/>
</dbReference>
<dbReference type="PDB" id="2ZYQ">
    <property type="method" value="X-ray"/>
    <property type="resolution" value="2.00 A"/>
    <property type="chains" value="A/B=1-300"/>
</dbReference>
<dbReference type="PDBsum" id="2ZI8"/>
<dbReference type="PDBsum" id="2ZYQ"/>
<dbReference type="SMR" id="P9WNW7"/>
<dbReference type="FunCoup" id="P9WNW7">
    <property type="interactions" value="22"/>
</dbReference>
<dbReference type="STRING" id="83332.Rv3568c"/>
<dbReference type="DrugBank" id="DB08542">
    <property type="generic name" value="3,4-dihydroxy-9,10-secoandrosta-1(10),2,4-triene-9,17-dione"/>
</dbReference>
<dbReference type="SwissLipids" id="SLP:000001005"/>
<dbReference type="PaxDb" id="83332-Rv3568c"/>
<dbReference type="DNASU" id="887886"/>
<dbReference type="GeneID" id="887886"/>
<dbReference type="KEGG" id="mtu:Rv3568c"/>
<dbReference type="KEGG" id="mtv:RVBD_3568c"/>
<dbReference type="TubercuList" id="Rv3568c"/>
<dbReference type="eggNOG" id="COG0346">
    <property type="taxonomic scope" value="Bacteria"/>
</dbReference>
<dbReference type="InParanoid" id="P9WNW7"/>
<dbReference type="OrthoDB" id="6909416at2"/>
<dbReference type="PhylomeDB" id="P9WNW7"/>
<dbReference type="BioCyc" id="MetaCyc:G185E-7846-MONOMER"/>
<dbReference type="SABIO-RK" id="P9WNW7"/>
<dbReference type="UniPathway" id="UPA00296"/>
<dbReference type="EvolutionaryTrace" id="P9WNW7"/>
<dbReference type="Proteomes" id="UP000001584">
    <property type="component" value="Chromosome"/>
</dbReference>
<dbReference type="GO" id="GO:0047071">
    <property type="term" value="F:3,4-dihydroxy-9,10-secoandrosta-1,3,5(10)-triene-9,17-dione 4,5-dioxygenase activity"/>
    <property type="evidence" value="ECO:0000314"/>
    <property type="project" value="MTBBASE"/>
</dbReference>
<dbReference type="GO" id="GO:0008198">
    <property type="term" value="F:ferrous iron binding"/>
    <property type="evidence" value="ECO:0007669"/>
    <property type="project" value="InterPro"/>
</dbReference>
<dbReference type="GO" id="GO:0005506">
    <property type="term" value="F:iron ion binding"/>
    <property type="evidence" value="ECO:0000314"/>
    <property type="project" value="MTBBASE"/>
</dbReference>
<dbReference type="GO" id="GO:0006707">
    <property type="term" value="P:cholesterol catabolic process"/>
    <property type="evidence" value="ECO:0000314"/>
    <property type="project" value="MTBBASE"/>
</dbReference>
<dbReference type="GO" id="GO:0070723">
    <property type="term" value="P:response to cholesterol"/>
    <property type="evidence" value="ECO:0000270"/>
    <property type="project" value="MTBBASE"/>
</dbReference>
<dbReference type="CDD" id="cd07237">
    <property type="entry name" value="BphC1-RGP6_C_like"/>
    <property type="match status" value="1"/>
</dbReference>
<dbReference type="CDD" id="cd07252">
    <property type="entry name" value="BphC1-RGP6_N_like"/>
    <property type="match status" value="1"/>
</dbReference>
<dbReference type="FunFam" id="3.10.180.10:FF:000012">
    <property type="entry name" value="2,3-dihydroxybiphenyl 1,2-dioxygenase"/>
    <property type="match status" value="1"/>
</dbReference>
<dbReference type="FunFam" id="3.10.180.10:FF:000024">
    <property type="entry name" value="2,3-dihydroxybiphenyl 1,2-dioxygenase"/>
    <property type="match status" value="1"/>
</dbReference>
<dbReference type="Gene3D" id="3.10.180.10">
    <property type="entry name" value="2,3-Dihydroxybiphenyl 1,2-Dioxygenase, domain 1"/>
    <property type="match status" value="2"/>
</dbReference>
<dbReference type="InterPro" id="IPR029068">
    <property type="entry name" value="Glyas_Bleomycin-R_OHBP_Dase"/>
</dbReference>
<dbReference type="InterPro" id="IPR004360">
    <property type="entry name" value="Glyas_Fos-R_dOase_dom"/>
</dbReference>
<dbReference type="InterPro" id="IPR050383">
    <property type="entry name" value="GlyoxalaseI/FosfomycinResist"/>
</dbReference>
<dbReference type="InterPro" id="IPR054680">
    <property type="entry name" value="HsaC"/>
</dbReference>
<dbReference type="InterPro" id="IPR037523">
    <property type="entry name" value="VOC"/>
</dbReference>
<dbReference type="InterPro" id="IPR000486">
    <property type="entry name" value="Xdiol_ring_cleave_dOase_1/2"/>
</dbReference>
<dbReference type="NCBIfam" id="NF045631">
    <property type="entry name" value="exdiol_diox_HsaC"/>
    <property type="match status" value="1"/>
</dbReference>
<dbReference type="PANTHER" id="PTHR21366:SF14">
    <property type="entry name" value="GLYOXALASE DOMAIN-CONTAINING PROTEIN 5"/>
    <property type="match status" value="1"/>
</dbReference>
<dbReference type="PANTHER" id="PTHR21366">
    <property type="entry name" value="GLYOXALASE FAMILY PROTEIN"/>
    <property type="match status" value="1"/>
</dbReference>
<dbReference type="Pfam" id="PF22632">
    <property type="entry name" value="BphC_D1"/>
    <property type="match status" value="1"/>
</dbReference>
<dbReference type="Pfam" id="PF00903">
    <property type="entry name" value="Glyoxalase"/>
    <property type="match status" value="1"/>
</dbReference>
<dbReference type="SUPFAM" id="SSF54593">
    <property type="entry name" value="Glyoxalase/Bleomycin resistance protein/Dihydroxybiphenyl dioxygenase"/>
    <property type="match status" value="2"/>
</dbReference>
<dbReference type="PROSITE" id="PS00082">
    <property type="entry name" value="EXTRADIOL_DIOXYGENAS"/>
    <property type="match status" value="1"/>
</dbReference>
<dbReference type="PROSITE" id="PS51819">
    <property type="entry name" value="VOC"/>
    <property type="match status" value="2"/>
</dbReference>
<gene>
    <name type="primary">hsaC</name>
    <name type="synonym">bphC</name>
    <name type="ordered locus">Rv3568c</name>
</gene>
<feature type="chain" id="PRO_0000404507" description="Iron-dependent extradiol dioxygenase">
    <location>
        <begin position="1"/>
        <end position="300"/>
    </location>
</feature>
<feature type="domain" description="VOC 1" evidence="1">
    <location>
        <begin position="5"/>
        <end position="120"/>
    </location>
</feature>
<feature type="domain" description="VOC 2" evidence="1">
    <location>
        <begin position="142"/>
        <end position="270"/>
    </location>
</feature>
<feature type="binding site">
    <location>
        <position position="145"/>
    </location>
    <ligand>
        <name>Fe cation</name>
        <dbReference type="ChEBI" id="CHEBI:24875"/>
    </ligand>
</feature>
<feature type="binding site" evidence="4">
    <location>
        <position position="200"/>
    </location>
    <ligand>
        <name>substrate</name>
    </ligand>
</feature>
<feature type="binding site">
    <location>
        <position position="215"/>
    </location>
    <ligand>
        <name>Fe cation</name>
        <dbReference type="ChEBI" id="CHEBI:24875"/>
    </ligand>
</feature>
<feature type="binding site" evidence="4">
    <location>
        <position position="215"/>
    </location>
    <ligand>
        <name>substrate</name>
    </ligand>
</feature>
<feature type="binding site" evidence="4">
    <location>
        <position position="250"/>
    </location>
    <ligand>
        <name>substrate</name>
    </ligand>
</feature>
<feature type="binding site" evidence="4">
    <location>
        <position position="256"/>
    </location>
    <ligand>
        <name>substrate</name>
    </ligand>
</feature>
<feature type="binding site">
    <location>
        <position position="266"/>
    </location>
    <ligand>
        <name>Fe cation</name>
        <dbReference type="ChEBI" id="CHEBI:24875"/>
    </ligand>
</feature>
<feature type="strand" evidence="7">
    <location>
        <begin position="5"/>
        <end position="14"/>
    </location>
</feature>
<feature type="helix" evidence="7">
    <location>
        <begin position="16"/>
        <end position="25"/>
    </location>
</feature>
<feature type="strand" evidence="7">
    <location>
        <begin position="40"/>
        <end position="48"/>
    </location>
</feature>
<feature type="strand" evidence="7">
    <location>
        <begin position="50"/>
        <end position="55"/>
    </location>
</feature>
<feature type="strand" evidence="7">
    <location>
        <begin position="60"/>
        <end position="67"/>
    </location>
</feature>
<feature type="helix" evidence="7">
    <location>
        <begin position="71"/>
        <end position="84"/>
    </location>
</feature>
<feature type="helix" evidence="7">
    <location>
        <begin position="93"/>
        <end position="99"/>
    </location>
</feature>
<feature type="strand" evidence="7">
    <location>
        <begin position="102"/>
        <end position="108"/>
    </location>
</feature>
<feature type="strand" evidence="7">
    <location>
        <begin position="114"/>
        <end position="119"/>
    </location>
</feature>
<feature type="helix" evidence="7">
    <location>
        <begin position="139"/>
        <end position="141"/>
    </location>
</feature>
<feature type="strand" evidence="7">
    <location>
        <begin position="145"/>
        <end position="149"/>
    </location>
</feature>
<feature type="helix" evidence="7">
    <location>
        <begin position="153"/>
        <end position="161"/>
    </location>
</feature>
<feature type="turn" evidence="7">
    <location>
        <begin position="162"/>
        <end position="164"/>
    </location>
</feature>
<feature type="strand" evidence="7">
    <location>
        <begin position="167"/>
        <end position="174"/>
    </location>
</feature>
<feature type="helix" evidence="7">
    <location>
        <begin position="176"/>
        <end position="179"/>
    </location>
</feature>
<feature type="strand" evidence="6">
    <location>
        <begin position="183"/>
        <end position="185"/>
    </location>
</feature>
<feature type="strand" evidence="7">
    <location>
        <begin position="188"/>
        <end position="199"/>
    </location>
</feature>
<feature type="strand" evidence="7">
    <location>
        <begin position="201"/>
        <end position="207"/>
    </location>
</feature>
<feature type="strand" evidence="7">
    <location>
        <begin position="210"/>
        <end position="222"/>
    </location>
</feature>
<feature type="helix" evidence="7">
    <location>
        <begin position="223"/>
        <end position="235"/>
    </location>
</feature>
<feature type="strand" evidence="7">
    <location>
        <begin position="240"/>
        <end position="250"/>
    </location>
</feature>
<feature type="strand" evidence="7">
    <location>
        <begin position="253"/>
        <end position="258"/>
    </location>
</feature>
<feature type="strand" evidence="7">
    <location>
        <begin position="262"/>
        <end position="269"/>
    </location>
</feature>
<feature type="turn" evidence="7">
    <location>
        <begin position="276"/>
        <end position="278"/>
    </location>
</feature>
<feature type="strand" evidence="7">
    <location>
        <begin position="287"/>
        <end position="291"/>
    </location>
</feature>
<feature type="helix" evidence="6">
    <location>
        <begin position="294"/>
        <end position="296"/>
    </location>
</feature>
<accession>P9WNW7</accession>
<accession>L0TFW3</accession>
<accession>P96850</accession>
<accession>Q7D597</accession>
<comment type="function">
    <text evidence="2">Catalyzes the meta-cleavage of 3,4-dihydroxy-9,10-seconandrost-1,3,5(10)-triene-9,17-dione (3,4-DHSA) to produce 4,5-9,10-diseco-3-hydroxy-5,9,17-trioxoandrosta-1(10),2-diene-4-oic acid (4,9-DSHA).</text>
</comment>
<comment type="catalytic activity">
    <reaction evidence="2">
        <text>3,4-dihydroxy-9,10-secoandrosta-1,3,5(10)-triene-9,17-dione + O2 = (1E,2Z)-3-hydroxy-5,9,17-trioxo-4,5:9,10-disecoandrosta-1(10),2-dien-4-oate + H(+)</text>
        <dbReference type="Rhea" id="RHEA:21352"/>
        <dbReference type="ChEBI" id="CHEBI:15378"/>
        <dbReference type="ChEBI" id="CHEBI:15379"/>
        <dbReference type="ChEBI" id="CHEBI:15896"/>
        <dbReference type="ChEBI" id="CHEBI:63690"/>
        <dbReference type="EC" id="1.13.11.25"/>
    </reaction>
</comment>
<comment type="cofactor">
    <cofactor evidence="4">
        <name>Fe(2+)</name>
        <dbReference type="ChEBI" id="CHEBI:29033"/>
    </cofactor>
    <text evidence="4">Binds 1 Fe(2+) ion per subunit.</text>
</comment>
<comment type="biophysicochemical properties">
    <kinetics>
        <KM evidence="2">0.9 uM for 3,4-DHSA (at pH 8 and at 25 degrees Celsius)</KM>
        <KM evidence="2">8.5 uM for 2,3-dihydroxybiphenyl (DHB) (at pH 8 and at 25 degrees Celsius)</KM>
        <Vmax evidence="2">12.0 umol/sec/mg enzyme with 3,4-DHSA as substrate (at pH 8 and at 25 degrees Celsius)</Vmax>
        <Vmax evidence="2">2.5 umol/sec/mg enzyme with DHB as substrate (at pH 8 and at 25 degrees Celsius)</Vmax>
    </kinetics>
</comment>
<comment type="pathway">
    <text>Steroid metabolism; cholesterol metabolism.</text>
</comment>
<comment type="subunit">
    <text evidence="4">Homodimer, but may form a homooctamer.</text>
</comment>
<comment type="induction">
    <text evidence="3">Induced by KstR.</text>
</comment>
<comment type="disruption phenotype">
    <text evidence="4">Cells lacking this gene completely fail to grow on cholesterol due the blockage of the catabolic pathway and develop a pink color consistent with the accumulation of toxic catechols. Mice intravenously infected with the mutant survive substantially longer than those infected with the wild-type.</text>
</comment>
<comment type="miscellaneous">
    <text>Cholesterol metabolism contributes to the survival of M.tuberculosis in the host by helping the bacterial multiplication during earlier stages of infection and to the dissemination of the pathogen in the host.</text>
</comment>
<comment type="similarity">
    <text evidence="5">Belongs to the extradiol ring-cleavage dioxygenase family.</text>
</comment>
<sequence>MSIRSLGYLRIEATDMAAWREYGLKVLGMVEGKGAPEGALYLRMDDFPARLVVVPGEHDRLLEAGWECANAEGLQEIRNRLDLEGTPYKEATAAELADRRVDEMIRFADPSGNCLEVFHGTALEHRRVVSPYGHRFVTGEQGMGHVVLSTRDDAEALHFYRDVLGFRLRDSMRLPPQMVGRPADGPPAWLRFFGCNPRHHSLAFLPMPTSSGIVHLMVEVEQADDVGLCLDRALRRKVPMSATLGRHVNDLMLSFYMKTPGGFDIEFGCEGRQVDDRDWIARESTAVSLWGHDFTVGARG</sequence>
<name>HSAC_MYCTU</name>